<gene>
    <name type="primary">cdsA</name>
    <name type="ordered locus">RF_0655</name>
</gene>
<dbReference type="EC" id="2.7.7.41"/>
<dbReference type="EMBL" id="CP000053">
    <property type="protein sequence ID" value="AAY61506.1"/>
    <property type="molecule type" value="Genomic_DNA"/>
</dbReference>
<dbReference type="SMR" id="Q4ULR7"/>
<dbReference type="STRING" id="315456.RF_0655"/>
<dbReference type="KEGG" id="rfe:RF_0655"/>
<dbReference type="eggNOG" id="COG0575">
    <property type="taxonomic scope" value="Bacteria"/>
</dbReference>
<dbReference type="HOGENOM" id="CLU_037294_1_1_5"/>
<dbReference type="OrthoDB" id="9799199at2"/>
<dbReference type="UniPathway" id="UPA00557">
    <property type="reaction ID" value="UER00614"/>
</dbReference>
<dbReference type="Proteomes" id="UP000008548">
    <property type="component" value="Chromosome"/>
</dbReference>
<dbReference type="GO" id="GO:0005886">
    <property type="term" value="C:plasma membrane"/>
    <property type="evidence" value="ECO:0007669"/>
    <property type="project" value="UniProtKB-SubCell"/>
</dbReference>
<dbReference type="GO" id="GO:0004605">
    <property type="term" value="F:phosphatidate cytidylyltransferase activity"/>
    <property type="evidence" value="ECO:0007669"/>
    <property type="project" value="UniProtKB-EC"/>
</dbReference>
<dbReference type="GO" id="GO:0016024">
    <property type="term" value="P:CDP-diacylglycerol biosynthetic process"/>
    <property type="evidence" value="ECO:0007669"/>
    <property type="project" value="UniProtKB-UniPathway"/>
</dbReference>
<dbReference type="InterPro" id="IPR000374">
    <property type="entry name" value="PC_trans"/>
</dbReference>
<dbReference type="PANTHER" id="PTHR46382">
    <property type="entry name" value="PHOSPHATIDATE CYTIDYLYLTRANSFERASE"/>
    <property type="match status" value="1"/>
</dbReference>
<dbReference type="PANTHER" id="PTHR46382:SF1">
    <property type="entry name" value="PHOSPHATIDATE CYTIDYLYLTRANSFERASE"/>
    <property type="match status" value="1"/>
</dbReference>
<dbReference type="Pfam" id="PF01148">
    <property type="entry name" value="CTP_transf_1"/>
    <property type="match status" value="1"/>
</dbReference>
<dbReference type="PROSITE" id="PS01315">
    <property type="entry name" value="CDS"/>
    <property type="match status" value="1"/>
</dbReference>
<protein>
    <recommendedName>
        <fullName>Phosphatidate cytidylyltransferase</fullName>
        <ecNumber>2.7.7.41</ecNumber>
    </recommendedName>
    <alternativeName>
        <fullName>CDP-DAG synthase</fullName>
    </alternativeName>
    <alternativeName>
        <fullName>CDP-DG synthase</fullName>
    </alternativeName>
    <alternativeName>
        <fullName>CDP-diacylglycerol synthase</fullName>
        <shortName>CDS</shortName>
    </alternativeName>
    <alternativeName>
        <fullName>CDP-diglyceride pyrophosphorylase</fullName>
    </alternativeName>
    <alternativeName>
        <fullName>CDP-diglyceride synthase</fullName>
    </alternativeName>
    <alternativeName>
        <fullName>CTP:phosphatidate cytidylyltransferase</fullName>
    </alternativeName>
</protein>
<feature type="chain" id="PRO_0000281058" description="Phosphatidate cytidylyltransferase">
    <location>
        <begin position="1"/>
        <end position="227"/>
    </location>
</feature>
<feature type="transmembrane region" description="Helical" evidence="2">
    <location>
        <begin position="31"/>
        <end position="51"/>
    </location>
</feature>
<feature type="transmembrane region" description="Helical" evidence="2">
    <location>
        <begin position="65"/>
        <end position="85"/>
    </location>
</feature>
<feature type="transmembrane region" description="Helical" evidence="2">
    <location>
        <begin position="93"/>
        <end position="113"/>
    </location>
</feature>
<feature type="transmembrane region" description="Helical" evidence="2">
    <location>
        <begin position="131"/>
        <end position="151"/>
    </location>
</feature>
<feature type="transmembrane region" description="Helical" evidence="2">
    <location>
        <begin position="165"/>
        <end position="185"/>
    </location>
</feature>
<feature type="transmembrane region" description="Helical" evidence="2">
    <location>
        <begin position="206"/>
        <end position="226"/>
    </location>
</feature>
<evidence type="ECO:0000250" key="1"/>
<evidence type="ECO:0000255" key="2"/>
<evidence type="ECO:0000305" key="3"/>
<accession>Q4ULR7</accession>
<name>CDSA_RICFE</name>
<organism>
    <name type="scientific">Rickettsia felis (strain ATCC VR-1525 / URRWXCal2)</name>
    <name type="common">Rickettsia azadi</name>
    <dbReference type="NCBI Taxonomy" id="315456"/>
    <lineage>
        <taxon>Bacteria</taxon>
        <taxon>Pseudomonadati</taxon>
        <taxon>Pseudomonadota</taxon>
        <taxon>Alphaproteobacteria</taxon>
        <taxon>Rickettsiales</taxon>
        <taxon>Rickettsiaceae</taxon>
        <taxon>Rickettsieae</taxon>
        <taxon>Rickettsia</taxon>
        <taxon>spotted fever group</taxon>
    </lineage>
</organism>
<reference key="1">
    <citation type="journal article" date="2005" name="PLoS Biol.">
        <title>The genome sequence of Rickettsia felis identifies the first putative conjugative plasmid in an obligate intracellular parasite.</title>
        <authorList>
            <person name="Ogata H."/>
            <person name="Renesto P."/>
            <person name="Audic S."/>
            <person name="Robert C."/>
            <person name="Blanc G."/>
            <person name="Fournier P.-E."/>
            <person name="Parinello H."/>
            <person name="Claverie J.-M."/>
            <person name="Raoult D."/>
        </authorList>
    </citation>
    <scope>NUCLEOTIDE SEQUENCE [LARGE SCALE GENOMIC DNA]</scope>
    <source>
        <strain>ATCC VR-1525 / URRWXCal2</strain>
    </source>
</reference>
<proteinExistence type="inferred from homology"/>
<keyword id="KW-1003">Cell membrane</keyword>
<keyword id="KW-0444">Lipid biosynthesis</keyword>
<keyword id="KW-0443">Lipid metabolism</keyword>
<keyword id="KW-0472">Membrane</keyword>
<keyword id="KW-0548">Nucleotidyltransferase</keyword>
<keyword id="KW-0594">Phospholipid biosynthesis</keyword>
<keyword id="KW-1208">Phospholipid metabolism</keyword>
<keyword id="KW-0808">Transferase</keyword>
<keyword id="KW-0812">Transmembrane</keyword>
<keyword id="KW-1133">Transmembrane helix</keyword>
<comment type="catalytic activity">
    <reaction>
        <text>a 1,2-diacyl-sn-glycero-3-phosphate + CTP + H(+) = a CDP-1,2-diacyl-sn-glycerol + diphosphate</text>
        <dbReference type="Rhea" id="RHEA:16229"/>
        <dbReference type="ChEBI" id="CHEBI:15378"/>
        <dbReference type="ChEBI" id="CHEBI:33019"/>
        <dbReference type="ChEBI" id="CHEBI:37563"/>
        <dbReference type="ChEBI" id="CHEBI:58332"/>
        <dbReference type="ChEBI" id="CHEBI:58608"/>
        <dbReference type="EC" id="2.7.7.41"/>
    </reaction>
</comment>
<comment type="pathway">
    <text>Phospholipid metabolism; CDP-diacylglycerol biosynthesis; CDP-diacylglycerol from sn-glycerol 3-phosphate: step 3/3.</text>
</comment>
<comment type="subcellular location">
    <subcellularLocation>
        <location evidence="1">Cell membrane</location>
        <topology evidence="1">Multi-pass membrane protein</topology>
    </subcellularLocation>
</comment>
<comment type="similarity">
    <text evidence="3">Belongs to the CDS family.</text>
</comment>
<sequence>MITQKGKEHLAKDKQNIYLRILSGIVLVPLFVIAILWFKPLFYILMILVGMGMLSEWYNMTYSSIPYLLIGLIIIPIPISLLTFLSMEDTNRWLIMLYFCIIWSVDSFAMIGGKTFKGAKLAPKISPKKTWSGLVTGVLSAGLVAVLASFIPNFHIENYYFSNKIYLFIISCILALIAQSSDLFISYLKRKFNIKDSGHIIPGHGGVLDRFDSIILTAPVLFFISIL</sequence>